<keyword id="KW-0002">3D-structure</keyword>
<evidence type="ECO:0000269" key="1">
    <source>
    </source>
</evidence>
<evidence type="ECO:0000303" key="2">
    <source>
    </source>
</evidence>
<evidence type="ECO:0000303" key="3">
    <source>
    </source>
</evidence>
<evidence type="ECO:0000305" key="4"/>
<evidence type="ECO:0000305" key="5">
    <source>
    </source>
</evidence>
<evidence type="ECO:0007744" key="6">
    <source>
        <dbReference type="PDB" id="7PCS"/>
    </source>
</evidence>
<evidence type="ECO:0007829" key="7">
    <source>
        <dbReference type="PDB" id="7PCS"/>
    </source>
</evidence>
<accession>Q9KJF2</accession>
<reference key="1">
    <citation type="journal article" date="2000" name="J. Bacteriol.">
        <title>Anaerobic toluene catabolism of Thauera aromatica: the bbs operon codes for enzymes of beta-oxidation of the intermediate benzylsuccinate.</title>
        <authorList>
            <person name="Leuthner B."/>
            <person name="Heider J."/>
        </authorList>
    </citation>
    <scope>NUCLEOTIDE SEQUENCE [GENOMIC DNA]</scope>
    <scope>PATHWAY</scope>
    <scope>INDUCTION</scope>
    <source>
        <strain>DSM 6984 / CIP 107765 / K172</strain>
    </source>
</reference>
<reference evidence="6" key="2">
    <citation type="journal article" date="2022" name="FEBS J.">
        <title>Inactive pseudoenzyme subunits in heterotetrameric BbsCD, a novel short-chain alcohol dehydrogenase involved in anaerobic toluene degradation.</title>
        <authorList>
            <person name="von Horsten S."/>
            <person name="Lippert M.L."/>
            <person name="Geisselbrecht Y."/>
            <person name="Schuehle K."/>
            <person name="Schall I."/>
            <person name="Essen L.O."/>
            <person name="Heider J."/>
        </authorList>
    </citation>
    <scope>X-RAY CRYSTALLOGRAPHY (2.25 ANGSTROMS) OF 1-98 AND 100-249 IN COMPLEX WITH BBSD</scope>
    <scope>FUNCTION</scope>
    <scope>PATHWAY</scope>
    <scope>SUBUNIT</scope>
</reference>
<organism>
    <name type="scientific">Thauera aromatica</name>
    <dbReference type="NCBI Taxonomy" id="59405"/>
    <lineage>
        <taxon>Bacteria</taxon>
        <taxon>Pseudomonadati</taxon>
        <taxon>Pseudomonadota</taxon>
        <taxon>Betaproteobacteria</taxon>
        <taxon>Rhodocyclales</taxon>
        <taxon>Zoogloeaceae</taxon>
        <taxon>Thauera</taxon>
    </lineage>
</organism>
<protein>
    <recommendedName>
        <fullName evidence="4">(2S)-[(R)-hydroxy(phenyl)methyl]succinyl-CoA dehydrogenase subunit BbsC</fullName>
    </recommendedName>
    <alternativeName>
        <fullName evidence="3">(S,R)-2-(alpha-hydroxybenzyl)succinyl-CoA dehydrogenase subunit BbsC</fullName>
    </alternativeName>
</protein>
<dbReference type="EMBL" id="AF173961">
    <property type="protein sequence ID" value="AAF89838.1"/>
    <property type="molecule type" value="Genomic_DNA"/>
</dbReference>
<dbReference type="PDB" id="7PCS">
    <property type="method" value="X-ray"/>
    <property type="resolution" value="2.25 A"/>
    <property type="chains" value="A/C=1-98, A/C=100-249"/>
</dbReference>
<dbReference type="PDBsum" id="7PCS"/>
<dbReference type="SMR" id="Q9KJF2"/>
<dbReference type="KEGG" id="ag:AAF89838"/>
<dbReference type="BioCyc" id="MetaCyc:MONOMER-689"/>
<dbReference type="UniPathway" id="UPA00273"/>
<dbReference type="GO" id="GO:0042203">
    <property type="term" value="P:toluene catabolic process"/>
    <property type="evidence" value="ECO:0007669"/>
    <property type="project" value="UniProtKB-UniPathway"/>
</dbReference>
<dbReference type="CDD" id="cd05233">
    <property type="entry name" value="SDR_c"/>
    <property type="match status" value="1"/>
</dbReference>
<dbReference type="Gene3D" id="3.40.50.720">
    <property type="entry name" value="NAD(P)-binding Rossmann-like Domain"/>
    <property type="match status" value="1"/>
</dbReference>
<dbReference type="InterPro" id="IPR036291">
    <property type="entry name" value="NAD(P)-bd_dom_sf"/>
</dbReference>
<dbReference type="InterPro" id="IPR050259">
    <property type="entry name" value="SDR"/>
</dbReference>
<dbReference type="InterPro" id="IPR002347">
    <property type="entry name" value="SDR_fam"/>
</dbReference>
<dbReference type="PANTHER" id="PTHR42879">
    <property type="entry name" value="3-OXOACYL-(ACYL-CARRIER-PROTEIN) REDUCTASE"/>
    <property type="match status" value="1"/>
</dbReference>
<dbReference type="PANTHER" id="PTHR42879:SF2">
    <property type="entry name" value="3-OXOACYL-[ACYL-CARRIER-PROTEIN] REDUCTASE FABG"/>
    <property type="match status" value="1"/>
</dbReference>
<dbReference type="Pfam" id="PF13561">
    <property type="entry name" value="adh_short_C2"/>
    <property type="match status" value="1"/>
</dbReference>
<dbReference type="PRINTS" id="PR00081">
    <property type="entry name" value="GDHRDH"/>
</dbReference>
<dbReference type="PRINTS" id="PR00080">
    <property type="entry name" value="SDRFAMILY"/>
</dbReference>
<dbReference type="SUPFAM" id="SSF51735">
    <property type="entry name" value="NAD(P)-binding Rossmann-fold domains"/>
    <property type="match status" value="1"/>
</dbReference>
<name>BBSC_THAAR</name>
<gene>
    <name evidence="2" type="primary">bbsC</name>
</gene>
<comment type="function">
    <text evidence="1">Involved in an anaerobic toluene degradation pathway (PubMed:34601806). Catalytically inactive subunit, which is probably required for the structural and/or regulatory integrity of the catalytic subunit BbsD (PubMed:34601806). This subunit cannot bind NAD(+) or substrate (PubMed:34601806).</text>
</comment>
<comment type="pathway">
    <text evidence="1 5">Xenobiotic degradation; toluene degradation.</text>
</comment>
<comment type="subunit">
    <text evidence="1">Heterotetramer composed of 2 inactive BbsC subunits and 2 active BbsD subunits.</text>
</comment>
<comment type="induction">
    <text evidence="5">Induced by toluene.</text>
</comment>
<comment type="similarity">
    <text evidence="4">Belongs to the short-chain dehydrogenases/reductases (SDR) family.</text>
</comment>
<sequence>MKSNSNGKVALIVNADDAVGEAVALRLAGSGVQLALAGADAGRLDKLASQLAGKGATVMAVATAAVEAGAIRDSVAQVKARYGRIDVLVHNESALAANLPEISDADVGAALDTGLAAPFHYLRAVVPGMREAGFGRVVNISDLRYLGLANTSSVAAARSGLFGLTRALALESARDGVTVNTVVMGDVDSETTPAAEREKLAGGIPVKRLGTPADIANAVGFLAADSSKYVTGQTLFVCGGKSAYFSMSI</sequence>
<feature type="chain" id="PRO_0000457322" description="(2S)-[(R)-hydroxy(phenyl)methyl]succinyl-CoA dehydrogenase subunit BbsC">
    <location>
        <begin position="1"/>
        <end position="249"/>
    </location>
</feature>
<feature type="strand" evidence="7">
    <location>
        <begin position="9"/>
        <end position="13"/>
    </location>
</feature>
<feature type="helix" evidence="7">
    <location>
        <begin position="18"/>
        <end position="29"/>
    </location>
</feature>
<feature type="strand" evidence="7">
    <location>
        <begin position="33"/>
        <end position="39"/>
    </location>
</feature>
<feature type="helix" evidence="7">
    <location>
        <begin position="41"/>
        <end position="54"/>
    </location>
</feature>
<feature type="strand" evidence="7">
    <location>
        <begin position="58"/>
        <end position="62"/>
    </location>
</feature>
<feature type="helix" evidence="7">
    <location>
        <begin position="68"/>
        <end position="82"/>
    </location>
</feature>
<feature type="strand" evidence="7">
    <location>
        <begin position="86"/>
        <end position="90"/>
    </location>
</feature>
<feature type="helix" evidence="7">
    <location>
        <begin position="104"/>
        <end position="114"/>
    </location>
</feature>
<feature type="helix" evidence="7">
    <location>
        <begin position="116"/>
        <end position="132"/>
    </location>
</feature>
<feature type="strand" evidence="7">
    <location>
        <begin position="135"/>
        <end position="142"/>
    </location>
</feature>
<feature type="helix" evidence="7">
    <location>
        <begin position="143"/>
        <end position="146"/>
    </location>
</feature>
<feature type="helix" evidence="7">
    <location>
        <begin position="152"/>
        <end position="172"/>
    </location>
</feature>
<feature type="helix" evidence="7">
    <location>
        <begin position="173"/>
        <end position="175"/>
    </location>
</feature>
<feature type="strand" evidence="7">
    <location>
        <begin position="177"/>
        <end position="184"/>
    </location>
</feature>
<feature type="strand" evidence="7">
    <location>
        <begin position="190"/>
        <end position="192"/>
    </location>
</feature>
<feature type="helix" evidence="7">
    <location>
        <begin position="194"/>
        <end position="202"/>
    </location>
</feature>
<feature type="helix" evidence="7">
    <location>
        <begin position="212"/>
        <end position="223"/>
    </location>
</feature>
<feature type="strand" evidence="7">
    <location>
        <begin position="234"/>
        <end position="238"/>
    </location>
</feature>
<feature type="helix" evidence="7">
    <location>
        <begin position="241"/>
        <end position="244"/>
    </location>
</feature>
<proteinExistence type="evidence at protein level"/>